<gene>
    <name type="primary">oadB</name>
    <name type="ordered locus">VC_0792</name>
</gene>
<accession>Q9KTU5</accession>
<reference key="1">
    <citation type="journal article" date="2000" name="Nature">
        <title>DNA sequence of both chromosomes of the cholera pathogen Vibrio cholerae.</title>
        <authorList>
            <person name="Heidelberg J.F."/>
            <person name="Eisen J.A."/>
            <person name="Nelson W.C."/>
            <person name="Clayton R.A."/>
            <person name="Gwinn M.L."/>
            <person name="Dodson R.J."/>
            <person name="Haft D.H."/>
            <person name="Hickey E.K."/>
            <person name="Peterson J.D."/>
            <person name="Umayam L.A."/>
            <person name="Gill S.R."/>
            <person name="Nelson K.E."/>
            <person name="Read T.D."/>
            <person name="Tettelin H."/>
            <person name="Richardson D.L."/>
            <person name="Ermolaeva M.D."/>
            <person name="Vamathevan J.J."/>
            <person name="Bass S."/>
            <person name="Qin H."/>
            <person name="Dragoi I."/>
            <person name="Sellers P."/>
            <person name="McDonald L.A."/>
            <person name="Utterback T.R."/>
            <person name="Fleischmann R.D."/>
            <person name="Nierman W.C."/>
            <person name="White O."/>
            <person name="Salzberg S.L."/>
            <person name="Smith H.O."/>
            <person name="Colwell R.R."/>
            <person name="Mekalanos J.J."/>
            <person name="Venter J.C."/>
            <person name="Fraser C.M."/>
        </authorList>
    </citation>
    <scope>NUCLEOTIDE SEQUENCE [LARGE SCALE GENOMIC DNA]</scope>
    <source>
        <strain>ATCC 39315 / El Tor Inaba N16961</strain>
    </source>
</reference>
<protein>
    <recommendedName>
        <fullName>Probable oxaloacetate decarboxylase beta chain</fullName>
        <ecNumber>7.2.4.2</ecNumber>
    </recommendedName>
</protein>
<feature type="chain" id="PRO_0000218567" description="Probable oxaloacetate decarboxylase beta chain">
    <location>
        <begin position="1"/>
        <end position="433"/>
    </location>
</feature>
<feature type="transmembrane region" description="Helical" evidence="2">
    <location>
        <begin position="13"/>
        <end position="35"/>
    </location>
</feature>
<feature type="transmembrane region" description="Helical" evidence="2">
    <location>
        <begin position="125"/>
        <end position="147"/>
    </location>
</feature>
<feature type="transmembrane region" description="Helical" evidence="2">
    <location>
        <begin position="162"/>
        <end position="184"/>
    </location>
</feature>
<feature type="transmembrane region" description="Helical" evidence="2">
    <location>
        <begin position="189"/>
        <end position="211"/>
    </location>
</feature>
<feature type="transmembrane region" description="Helical" evidence="2">
    <location>
        <begin position="215"/>
        <end position="237"/>
    </location>
</feature>
<feature type="transmembrane region" description="Helical" evidence="2">
    <location>
        <begin position="267"/>
        <end position="289"/>
    </location>
</feature>
<feature type="transmembrane region" description="Helical" evidence="2">
    <location>
        <begin position="309"/>
        <end position="328"/>
    </location>
</feature>
<feature type="transmembrane region" description="Helical" evidence="2">
    <location>
        <begin position="340"/>
        <end position="362"/>
    </location>
</feature>
<feature type="transmembrane region" description="Helical" evidence="2">
    <location>
        <begin position="404"/>
        <end position="426"/>
    </location>
</feature>
<proteinExistence type="inferred from homology"/>
<dbReference type="EC" id="7.2.4.2"/>
<dbReference type="EMBL" id="AE003852">
    <property type="protein sequence ID" value="AAF93957.1"/>
    <property type="molecule type" value="Genomic_DNA"/>
</dbReference>
<dbReference type="PIR" id="D82280">
    <property type="entry name" value="D82280"/>
</dbReference>
<dbReference type="RefSeq" id="NP_230441.1">
    <property type="nucleotide sequence ID" value="NC_002505.1"/>
</dbReference>
<dbReference type="RefSeq" id="WP_000427751.1">
    <property type="nucleotide sequence ID" value="NZ_LT906614.1"/>
</dbReference>
<dbReference type="SMR" id="Q9KTU5"/>
<dbReference type="STRING" id="243277.VC_0792"/>
<dbReference type="TCDB" id="3.B.1.1.6">
    <property type="family name" value="the na(+)-transporting carboxylic acid decarboxylase (nat-dc) family"/>
</dbReference>
<dbReference type="DNASU" id="2615335"/>
<dbReference type="EnsemblBacteria" id="AAF93957">
    <property type="protein sequence ID" value="AAF93957"/>
    <property type="gene ID" value="VC_0792"/>
</dbReference>
<dbReference type="KEGG" id="vch:VC_0792"/>
<dbReference type="PATRIC" id="fig|243277.26.peg.754"/>
<dbReference type="eggNOG" id="COG1883">
    <property type="taxonomic scope" value="Bacteria"/>
</dbReference>
<dbReference type="HOGENOM" id="CLU_036168_0_0_6"/>
<dbReference type="PHI-base" id="PHI:7640"/>
<dbReference type="Proteomes" id="UP000000584">
    <property type="component" value="Chromosome 1"/>
</dbReference>
<dbReference type="GO" id="GO:0005886">
    <property type="term" value="C:plasma membrane"/>
    <property type="evidence" value="ECO:0007669"/>
    <property type="project" value="UniProtKB-SubCell"/>
</dbReference>
<dbReference type="GO" id="GO:0015451">
    <property type="term" value="F:decarboxylation-driven active transmembrane transporter activity"/>
    <property type="evidence" value="ECO:0007669"/>
    <property type="project" value="UniProtKB-EC"/>
</dbReference>
<dbReference type="GO" id="GO:0016829">
    <property type="term" value="F:lyase activity"/>
    <property type="evidence" value="ECO:0007669"/>
    <property type="project" value="InterPro"/>
</dbReference>
<dbReference type="GO" id="GO:0006814">
    <property type="term" value="P:sodium ion transport"/>
    <property type="evidence" value="ECO:0007669"/>
    <property type="project" value="UniProtKB-KW"/>
</dbReference>
<dbReference type="InterPro" id="IPR005661">
    <property type="entry name" value="OadB_MmdB"/>
</dbReference>
<dbReference type="NCBIfam" id="TIGR01109">
    <property type="entry name" value="Na_pump_decarbB"/>
    <property type="match status" value="1"/>
</dbReference>
<dbReference type="PANTHER" id="PTHR35806">
    <property type="entry name" value="OXALOACETATE DECARBOXYLASE BETA CHAIN 2"/>
    <property type="match status" value="1"/>
</dbReference>
<dbReference type="PANTHER" id="PTHR35806:SF1">
    <property type="entry name" value="OXALOACETATE DECARBOXYLASE BETA CHAIN 2"/>
    <property type="match status" value="1"/>
</dbReference>
<dbReference type="Pfam" id="PF03977">
    <property type="entry name" value="OAD_beta"/>
    <property type="match status" value="1"/>
</dbReference>
<dbReference type="PIRSF" id="PIRSF015658">
    <property type="entry name" value="MmdB_OadB"/>
    <property type="match status" value="1"/>
</dbReference>
<sequence length="433" mass="45599">MENILAMVRDFGLFHLQWGQGIMILVGLVLLYLAIVKRFEPLLLVPIGFGGILSNLPDAGLAMSAIENAVYAAKPEVMTAFSEVLQLSSYMPADIKQALSSATPLQMTTLHLLAEQYQYSDGMLYLFYSIAIASGAGPLIIFMGVGAMTDFGPLLANPKTLLLGAAAQFGIFTTVLGALALSSLGVMDFSVAQAAAIGIIGGADGPTAIYVSSMLAPELLGAIAVAAYSYMALVPMIQPPIMRALTTQEERKIQMQQLRQVHKLEKIGFPLLLLILIALLLPSATPLLGMFCFGNLMRECGVVERLSDTAQNALINIVTIFLGLSVGSKLMADKFLQPQTIGILVLGIVAFCVGTAAGVLMAKLMNRFSTTKLNPLIGSAGVSAVPMAARVSNKVGLEANAQNFLLMHAMGPNVAGVIGSAVAAGVMIKYVMG</sequence>
<keyword id="KW-1003">Cell membrane</keyword>
<keyword id="KW-0406">Ion transport</keyword>
<keyword id="KW-0472">Membrane</keyword>
<keyword id="KW-1185">Reference proteome</keyword>
<keyword id="KW-0915">Sodium</keyword>
<keyword id="KW-0739">Sodium transport</keyword>
<keyword id="KW-1278">Translocase</keyword>
<keyword id="KW-0812">Transmembrane</keyword>
<keyword id="KW-1133">Transmembrane helix</keyword>
<keyword id="KW-0813">Transport</keyword>
<evidence type="ECO:0000250" key="1"/>
<evidence type="ECO:0000255" key="2"/>
<evidence type="ECO:0000305" key="3"/>
<name>OADB_VIBCH</name>
<organism>
    <name type="scientific">Vibrio cholerae serotype O1 (strain ATCC 39315 / El Tor Inaba N16961)</name>
    <dbReference type="NCBI Taxonomy" id="243277"/>
    <lineage>
        <taxon>Bacteria</taxon>
        <taxon>Pseudomonadati</taxon>
        <taxon>Pseudomonadota</taxon>
        <taxon>Gammaproteobacteria</taxon>
        <taxon>Vibrionales</taxon>
        <taxon>Vibrionaceae</taxon>
        <taxon>Vibrio</taxon>
    </lineage>
</organism>
<comment type="function">
    <text evidence="1">Catalyzes the decarboxylation of oxaloacetate coupled to Na(+) translocation.</text>
</comment>
<comment type="catalytic activity">
    <reaction>
        <text>oxaloacetate + 2 Na(+)(in) + H(+) = pyruvate + 2 Na(+)(out) + CO2</text>
        <dbReference type="Rhea" id="RHEA:57724"/>
        <dbReference type="ChEBI" id="CHEBI:15361"/>
        <dbReference type="ChEBI" id="CHEBI:15378"/>
        <dbReference type="ChEBI" id="CHEBI:16452"/>
        <dbReference type="ChEBI" id="CHEBI:16526"/>
        <dbReference type="ChEBI" id="CHEBI:29101"/>
        <dbReference type="EC" id="7.2.4.2"/>
    </reaction>
</comment>
<comment type="cofactor">
    <cofactor evidence="1">
        <name>Na(+)</name>
        <dbReference type="ChEBI" id="CHEBI:29101"/>
    </cofactor>
</comment>
<comment type="subunit">
    <text evidence="1">Heterotrimer of an alpha, a beta and a gamma subunit.</text>
</comment>
<comment type="subcellular location">
    <subcellularLocation>
        <location evidence="1">Cell membrane</location>
        <topology evidence="1">Multi-pass membrane protein</topology>
    </subcellularLocation>
</comment>
<comment type="similarity">
    <text evidence="3">Belongs to the GcdB/MmdB/OadB family.</text>
</comment>